<reference key="1">
    <citation type="submission" date="2007-02" db="EMBL/GenBank/DDBJ databases">
        <title>Complete sequence of chromosome of Shewanella baltica OS155.</title>
        <authorList>
            <consortium name="US DOE Joint Genome Institute"/>
            <person name="Copeland A."/>
            <person name="Lucas S."/>
            <person name="Lapidus A."/>
            <person name="Barry K."/>
            <person name="Detter J.C."/>
            <person name="Glavina del Rio T."/>
            <person name="Hammon N."/>
            <person name="Israni S."/>
            <person name="Dalin E."/>
            <person name="Tice H."/>
            <person name="Pitluck S."/>
            <person name="Sims D.R."/>
            <person name="Brettin T."/>
            <person name="Bruce D."/>
            <person name="Han C."/>
            <person name="Tapia R."/>
            <person name="Brainard J."/>
            <person name="Schmutz J."/>
            <person name="Larimer F."/>
            <person name="Land M."/>
            <person name="Hauser L."/>
            <person name="Kyrpides N."/>
            <person name="Mikhailova N."/>
            <person name="Brettar I."/>
            <person name="Klappenbach J."/>
            <person name="Konstantinidis K."/>
            <person name="Rodrigues J."/>
            <person name="Tiedje J."/>
            <person name="Richardson P."/>
        </authorList>
    </citation>
    <scope>NUCLEOTIDE SEQUENCE [LARGE SCALE GENOMIC DNA]</scope>
    <source>
        <strain>OS155 / ATCC BAA-1091</strain>
    </source>
</reference>
<sequence>MEKVFERLMYASRWIMAPIYLGLSLILFALGVKFFQEIFHLLPNIFKIGEVDLVLLTLSLIDITLVGGLIVMVMFSGYENFVSQLDVGEDNDKLSWLGKMDAGSLKNKVAASIVAISSIHLLKVFMNAENISNDKIMWYLLIHITFVLSAFAMGYLDKITRTGK</sequence>
<proteinExistence type="inferred from homology"/>
<keyword id="KW-1003">Cell membrane</keyword>
<keyword id="KW-0472">Membrane</keyword>
<keyword id="KW-1185">Reference proteome</keyword>
<keyword id="KW-0812">Transmembrane</keyword>
<keyword id="KW-1133">Transmembrane helix</keyword>
<protein>
    <recommendedName>
        <fullName evidence="1">UPF0114 protein Sbal_0780</fullName>
    </recommendedName>
</protein>
<accession>A3D0P2</accession>
<feature type="chain" id="PRO_1000009490" description="UPF0114 protein Sbal_0780">
    <location>
        <begin position="1"/>
        <end position="164"/>
    </location>
</feature>
<feature type="transmembrane region" description="Helical" evidence="1">
    <location>
        <begin position="15"/>
        <end position="35"/>
    </location>
</feature>
<feature type="transmembrane region" description="Helical" evidence="1">
    <location>
        <begin position="53"/>
        <end position="73"/>
    </location>
</feature>
<feature type="transmembrane region" description="Helical" evidence="1">
    <location>
        <begin position="109"/>
        <end position="129"/>
    </location>
</feature>
<feature type="transmembrane region" description="Helical" evidence="1">
    <location>
        <begin position="136"/>
        <end position="156"/>
    </location>
</feature>
<name>Y780_SHEB5</name>
<dbReference type="EMBL" id="CP000563">
    <property type="protein sequence ID" value="ABN60305.1"/>
    <property type="molecule type" value="Genomic_DNA"/>
</dbReference>
<dbReference type="RefSeq" id="WP_011845886.1">
    <property type="nucleotide sequence ID" value="NC_009052.1"/>
</dbReference>
<dbReference type="KEGG" id="sbl:Sbal_0780"/>
<dbReference type="HOGENOM" id="CLU_097887_1_0_6"/>
<dbReference type="OrthoDB" id="9783569at2"/>
<dbReference type="Proteomes" id="UP000001557">
    <property type="component" value="Chromosome"/>
</dbReference>
<dbReference type="GO" id="GO:0005886">
    <property type="term" value="C:plasma membrane"/>
    <property type="evidence" value="ECO:0007669"/>
    <property type="project" value="UniProtKB-SubCell"/>
</dbReference>
<dbReference type="HAMAP" id="MF_00143">
    <property type="entry name" value="UPF0114"/>
    <property type="match status" value="1"/>
</dbReference>
<dbReference type="InterPro" id="IPR005134">
    <property type="entry name" value="UPF0114"/>
</dbReference>
<dbReference type="InterPro" id="IPR020761">
    <property type="entry name" value="UPF0114_bac"/>
</dbReference>
<dbReference type="NCBIfam" id="TIGR00645">
    <property type="entry name" value="HI0507"/>
    <property type="match status" value="1"/>
</dbReference>
<dbReference type="PANTHER" id="PTHR38596">
    <property type="entry name" value="UPF0114 PROTEIN YQHA"/>
    <property type="match status" value="1"/>
</dbReference>
<dbReference type="PANTHER" id="PTHR38596:SF1">
    <property type="entry name" value="UPF0114 PROTEIN YQHA"/>
    <property type="match status" value="1"/>
</dbReference>
<dbReference type="Pfam" id="PF03350">
    <property type="entry name" value="UPF0114"/>
    <property type="match status" value="1"/>
</dbReference>
<evidence type="ECO:0000255" key="1">
    <source>
        <dbReference type="HAMAP-Rule" id="MF_00143"/>
    </source>
</evidence>
<comment type="subcellular location">
    <subcellularLocation>
        <location evidence="1">Cell membrane</location>
        <topology evidence="1">Multi-pass membrane protein</topology>
    </subcellularLocation>
</comment>
<comment type="similarity">
    <text evidence="1">Belongs to the UPF0114 family.</text>
</comment>
<gene>
    <name type="ordered locus">Sbal_0780</name>
</gene>
<organism>
    <name type="scientific">Shewanella baltica (strain OS155 / ATCC BAA-1091)</name>
    <dbReference type="NCBI Taxonomy" id="325240"/>
    <lineage>
        <taxon>Bacteria</taxon>
        <taxon>Pseudomonadati</taxon>
        <taxon>Pseudomonadota</taxon>
        <taxon>Gammaproteobacteria</taxon>
        <taxon>Alteromonadales</taxon>
        <taxon>Shewanellaceae</taxon>
        <taxon>Shewanella</taxon>
    </lineage>
</organism>